<organism>
    <name type="scientific">Vibrio cholerae serotype O1 (strain ATCC 39315 / El Tor Inaba N16961)</name>
    <dbReference type="NCBI Taxonomy" id="243277"/>
    <lineage>
        <taxon>Bacteria</taxon>
        <taxon>Pseudomonadati</taxon>
        <taxon>Pseudomonadota</taxon>
        <taxon>Gammaproteobacteria</taxon>
        <taxon>Vibrionales</taxon>
        <taxon>Vibrionaceae</taxon>
        <taxon>Vibrio</taxon>
    </lineage>
</organism>
<dbReference type="EC" id="1.2.1.11" evidence="2"/>
<dbReference type="EMBL" id="AE003852">
    <property type="protein sequence ID" value="AAF95184.1"/>
    <property type="molecule type" value="Genomic_DNA"/>
</dbReference>
<dbReference type="PIR" id="F82125">
    <property type="entry name" value="F82125"/>
</dbReference>
<dbReference type="RefSeq" id="NP_231670.1">
    <property type="nucleotide sequence ID" value="NC_002505.1"/>
</dbReference>
<dbReference type="PDB" id="1MB4">
    <property type="method" value="X-ray"/>
    <property type="resolution" value="1.84 A"/>
    <property type="chains" value="A/B=1-370"/>
</dbReference>
<dbReference type="PDB" id="1MC4">
    <property type="method" value="X-ray"/>
    <property type="resolution" value="2.77 A"/>
    <property type="chains" value="A=1-370"/>
</dbReference>
<dbReference type="PDB" id="3PZR">
    <property type="method" value="X-ray"/>
    <property type="resolution" value="1.75 A"/>
    <property type="chains" value="A/B=1-370"/>
</dbReference>
<dbReference type="PDB" id="3Q0E">
    <property type="method" value="X-ray"/>
    <property type="resolution" value="1.80 A"/>
    <property type="chains" value="A/B=1-370"/>
</dbReference>
<dbReference type="PDB" id="4R5M">
    <property type="method" value="X-ray"/>
    <property type="resolution" value="1.89 A"/>
    <property type="chains" value="A/B=1-370"/>
</dbReference>
<dbReference type="PDBsum" id="1MB4"/>
<dbReference type="PDBsum" id="1MC4"/>
<dbReference type="PDBsum" id="3PZR"/>
<dbReference type="PDBsum" id="3Q0E"/>
<dbReference type="PDBsum" id="4R5M"/>
<dbReference type="SMR" id="Q9KQG2"/>
<dbReference type="STRING" id="243277.VC_2036"/>
<dbReference type="DNASU" id="2613415"/>
<dbReference type="EnsemblBacteria" id="AAF95184">
    <property type="protein sequence ID" value="AAF95184"/>
    <property type="gene ID" value="VC_2036"/>
</dbReference>
<dbReference type="KEGG" id="vch:VC_2036"/>
<dbReference type="PATRIC" id="fig|243277.26.peg.1944"/>
<dbReference type="eggNOG" id="COG0136">
    <property type="taxonomic scope" value="Bacteria"/>
</dbReference>
<dbReference type="HOGENOM" id="CLU_066397_0_0_6"/>
<dbReference type="BioCyc" id="MetaCyc:FY484_RS10165-MONOMER"/>
<dbReference type="BRENDA" id="1.2.1.11">
    <property type="organism ID" value="6626"/>
</dbReference>
<dbReference type="SABIO-RK" id="Q9KQG2"/>
<dbReference type="UniPathway" id="UPA00034">
    <property type="reaction ID" value="UER00016"/>
</dbReference>
<dbReference type="UniPathway" id="UPA00050">
    <property type="reaction ID" value="UER00463"/>
</dbReference>
<dbReference type="UniPathway" id="UPA00051">
    <property type="reaction ID" value="UER00464"/>
</dbReference>
<dbReference type="EvolutionaryTrace" id="Q9KQG2"/>
<dbReference type="Proteomes" id="UP000000584">
    <property type="component" value="Chromosome 1"/>
</dbReference>
<dbReference type="GO" id="GO:0004073">
    <property type="term" value="F:aspartate-semialdehyde dehydrogenase activity"/>
    <property type="evidence" value="ECO:0007669"/>
    <property type="project" value="UniProtKB-UniRule"/>
</dbReference>
<dbReference type="GO" id="GO:0051287">
    <property type="term" value="F:NAD binding"/>
    <property type="evidence" value="ECO:0007669"/>
    <property type="project" value="InterPro"/>
</dbReference>
<dbReference type="GO" id="GO:0050661">
    <property type="term" value="F:NADP binding"/>
    <property type="evidence" value="ECO:0007669"/>
    <property type="project" value="UniProtKB-UniRule"/>
</dbReference>
<dbReference type="GO" id="GO:0046983">
    <property type="term" value="F:protein dimerization activity"/>
    <property type="evidence" value="ECO:0007669"/>
    <property type="project" value="InterPro"/>
</dbReference>
<dbReference type="GO" id="GO:0071266">
    <property type="term" value="P:'de novo' L-methionine biosynthetic process"/>
    <property type="evidence" value="ECO:0007669"/>
    <property type="project" value="UniProtKB-UniRule"/>
</dbReference>
<dbReference type="GO" id="GO:0019877">
    <property type="term" value="P:diaminopimelate biosynthetic process"/>
    <property type="evidence" value="ECO:0007669"/>
    <property type="project" value="UniProtKB-UniRule"/>
</dbReference>
<dbReference type="GO" id="GO:0009097">
    <property type="term" value="P:isoleucine biosynthetic process"/>
    <property type="evidence" value="ECO:0007669"/>
    <property type="project" value="InterPro"/>
</dbReference>
<dbReference type="GO" id="GO:0009089">
    <property type="term" value="P:lysine biosynthetic process via diaminopimelate"/>
    <property type="evidence" value="ECO:0007669"/>
    <property type="project" value="UniProtKB-UniRule"/>
</dbReference>
<dbReference type="GO" id="GO:0009088">
    <property type="term" value="P:threonine biosynthetic process"/>
    <property type="evidence" value="ECO:0007669"/>
    <property type="project" value="UniProtKB-UniRule"/>
</dbReference>
<dbReference type="CDD" id="cd23938">
    <property type="entry name" value="ASADH_C_bac_like"/>
    <property type="match status" value="1"/>
</dbReference>
<dbReference type="CDD" id="cd02314">
    <property type="entry name" value="VcASADH1_like_N"/>
    <property type="match status" value="1"/>
</dbReference>
<dbReference type="FunFam" id="3.30.360.10:FF:000012">
    <property type="entry name" value="Aspartate-semialdehyde dehydrogenase"/>
    <property type="match status" value="1"/>
</dbReference>
<dbReference type="FunFam" id="3.40.50.720:FF:000152">
    <property type="entry name" value="Aspartate-semialdehyde dehydrogenase"/>
    <property type="match status" value="1"/>
</dbReference>
<dbReference type="Gene3D" id="3.30.360.10">
    <property type="entry name" value="Dihydrodipicolinate Reductase, domain 2"/>
    <property type="match status" value="1"/>
</dbReference>
<dbReference type="Gene3D" id="3.40.50.720">
    <property type="entry name" value="NAD(P)-binding Rossmann-like Domain"/>
    <property type="match status" value="1"/>
</dbReference>
<dbReference type="HAMAP" id="MF_02121">
    <property type="entry name" value="ASADH"/>
    <property type="match status" value="1"/>
</dbReference>
<dbReference type="InterPro" id="IPR000319">
    <property type="entry name" value="Asp-semialdehyde_DH_CS"/>
</dbReference>
<dbReference type="InterPro" id="IPR011534">
    <property type="entry name" value="Asp_ADH_gamma-type"/>
</dbReference>
<dbReference type="InterPro" id="IPR012080">
    <property type="entry name" value="Asp_semialdehyde_DH"/>
</dbReference>
<dbReference type="InterPro" id="IPR036291">
    <property type="entry name" value="NAD(P)-bd_dom_sf"/>
</dbReference>
<dbReference type="InterPro" id="IPR000534">
    <property type="entry name" value="Semialdehyde_DH_NAD-bd"/>
</dbReference>
<dbReference type="InterPro" id="IPR012280">
    <property type="entry name" value="Semialdhyde_DH_dimer_dom"/>
</dbReference>
<dbReference type="NCBIfam" id="TIGR01745">
    <property type="entry name" value="asd_gamma"/>
    <property type="match status" value="1"/>
</dbReference>
<dbReference type="NCBIfam" id="NF005144">
    <property type="entry name" value="PRK06598.1"/>
    <property type="match status" value="1"/>
</dbReference>
<dbReference type="PANTHER" id="PTHR46278:SF4">
    <property type="entry name" value="ASPARTATE-SEMIALDEHYDE DEHYDROGENASE"/>
    <property type="match status" value="1"/>
</dbReference>
<dbReference type="PANTHER" id="PTHR46278">
    <property type="entry name" value="DEHYDROGENASE, PUTATIVE-RELATED"/>
    <property type="match status" value="1"/>
</dbReference>
<dbReference type="Pfam" id="PF01118">
    <property type="entry name" value="Semialdhyde_dh"/>
    <property type="match status" value="1"/>
</dbReference>
<dbReference type="Pfam" id="PF02774">
    <property type="entry name" value="Semialdhyde_dhC"/>
    <property type="match status" value="1"/>
</dbReference>
<dbReference type="PIRSF" id="PIRSF000148">
    <property type="entry name" value="ASA_dh"/>
    <property type="match status" value="1"/>
</dbReference>
<dbReference type="SMART" id="SM00859">
    <property type="entry name" value="Semialdhyde_dh"/>
    <property type="match status" value="1"/>
</dbReference>
<dbReference type="SUPFAM" id="SSF55347">
    <property type="entry name" value="Glyceraldehyde-3-phosphate dehydrogenase-like, C-terminal domain"/>
    <property type="match status" value="1"/>
</dbReference>
<dbReference type="SUPFAM" id="SSF51735">
    <property type="entry name" value="NAD(P)-binding Rossmann-fold domains"/>
    <property type="match status" value="1"/>
</dbReference>
<dbReference type="PROSITE" id="PS01103">
    <property type="entry name" value="ASD"/>
    <property type="match status" value="1"/>
</dbReference>
<feature type="chain" id="PRO_0000411126" description="Aspartate-semialdehyde dehydrogenase 1">
    <location>
        <begin position="1"/>
        <end position="370"/>
    </location>
</feature>
<feature type="active site" description="Acyl-thioester intermediate" evidence="3">
    <location>
        <position position="134"/>
    </location>
</feature>
<feature type="active site" description="Proton acceptor" evidence="4">
    <location>
        <position position="274"/>
    </location>
</feature>
<feature type="binding site" evidence="3">
    <location>
        <begin position="9"/>
        <end position="12"/>
    </location>
    <ligand>
        <name>NADP(+)</name>
        <dbReference type="ChEBI" id="CHEBI:58349"/>
    </ligand>
</feature>
<feature type="binding site" evidence="3">
    <location>
        <begin position="36"/>
        <end position="37"/>
    </location>
    <ligand>
        <name>NADP(+)</name>
        <dbReference type="ChEBI" id="CHEBI:58349"/>
    </ligand>
</feature>
<feature type="binding site" evidence="3">
    <location>
        <position position="72"/>
    </location>
    <ligand>
        <name>NADP(+)</name>
        <dbReference type="ChEBI" id="CHEBI:58349"/>
    </ligand>
</feature>
<feature type="binding site" evidence="1">
    <location>
        <position position="101"/>
    </location>
    <ligand>
        <name>phosphate</name>
        <dbReference type="ChEBI" id="CHEBI:43474"/>
    </ligand>
</feature>
<feature type="binding site" evidence="4">
    <location>
        <position position="161"/>
    </location>
    <ligand>
        <name>substrate</name>
    </ligand>
</feature>
<feature type="binding site" evidence="3">
    <location>
        <begin position="164"/>
        <end position="165"/>
    </location>
    <ligand>
        <name>NADP(+)</name>
        <dbReference type="ChEBI" id="CHEBI:58349"/>
    </ligand>
</feature>
<feature type="binding site" evidence="3">
    <location>
        <position position="192"/>
    </location>
    <ligand>
        <name>NADP(+)</name>
        <dbReference type="ChEBI" id="CHEBI:58349"/>
    </ligand>
</feature>
<feature type="binding site" evidence="4">
    <location>
        <position position="240"/>
    </location>
    <ligand>
        <name>substrate</name>
    </ligand>
</feature>
<feature type="binding site" evidence="1">
    <location>
        <position position="243"/>
    </location>
    <ligand>
        <name>phosphate</name>
        <dbReference type="ChEBI" id="CHEBI:43474"/>
    </ligand>
</feature>
<feature type="binding site" evidence="4">
    <location>
        <position position="267"/>
    </location>
    <ligand>
        <name>substrate</name>
    </ligand>
</feature>
<feature type="binding site" evidence="3">
    <location>
        <position position="350"/>
    </location>
    <ligand>
        <name>NADP(+)</name>
        <dbReference type="ChEBI" id="CHEBI:58349"/>
    </ligand>
</feature>
<feature type="modified residue" description="S-cysteinyl cysteine; in inhibited form">
    <location>
        <position position="134"/>
    </location>
</feature>
<feature type="strand" evidence="7">
    <location>
        <begin position="2"/>
        <end position="7"/>
    </location>
</feature>
<feature type="helix" evidence="7">
    <location>
        <begin position="11"/>
        <end position="22"/>
    </location>
</feature>
<feature type="helix" evidence="7">
    <location>
        <begin position="25"/>
        <end position="28"/>
    </location>
</feature>
<feature type="strand" evidence="7">
    <location>
        <begin position="29"/>
        <end position="38"/>
    </location>
</feature>
<feature type="strand" evidence="8">
    <location>
        <begin position="40"/>
        <end position="42"/>
    </location>
</feature>
<feature type="strand" evidence="7">
    <location>
        <begin position="46"/>
        <end position="48"/>
    </location>
</feature>
<feature type="helix" evidence="7">
    <location>
        <begin position="59"/>
        <end position="62"/>
    </location>
</feature>
<feature type="strand" evidence="7">
    <location>
        <begin position="66"/>
        <end position="70"/>
    </location>
</feature>
<feature type="helix" evidence="7">
    <location>
        <begin position="74"/>
        <end position="86"/>
    </location>
</feature>
<feature type="strand" evidence="7">
    <location>
        <begin position="92"/>
        <end position="95"/>
    </location>
</feature>
<feature type="turn" evidence="7">
    <location>
        <begin position="99"/>
        <end position="102"/>
    </location>
</feature>
<feature type="strand" evidence="7">
    <location>
        <begin position="106"/>
        <end position="109"/>
    </location>
</feature>
<feature type="helix" evidence="7">
    <location>
        <begin position="111"/>
        <end position="123"/>
    </location>
</feature>
<feature type="strand" evidence="7">
    <location>
        <begin position="128"/>
        <end position="131"/>
    </location>
</feature>
<feature type="helix" evidence="7">
    <location>
        <begin position="134"/>
        <end position="148"/>
    </location>
</feature>
<feature type="strand" evidence="7">
    <location>
        <begin position="152"/>
        <end position="161"/>
    </location>
</feature>
<feature type="helix" evidence="7">
    <location>
        <begin position="163"/>
        <end position="165"/>
    </location>
</feature>
<feature type="helix" evidence="7">
    <location>
        <begin position="168"/>
        <end position="190"/>
    </location>
</feature>
<feature type="helix" evidence="7">
    <location>
        <begin position="196"/>
        <end position="208"/>
    </location>
</feature>
<feature type="turn" evidence="7">
    <location>
        <begin position="215"/>
        <end position="217"/>
    </location>
</feature>
<feature type="strand" evidence="7">
    <location>
        <begin position="224"/>
        <end position="227"/>
    </location>
</feature>
<feature type="strand" evidence="5">
    <location>
        <begin position="234"/>
        <end position="236"/>
    </location>
</feature>
<feature type="helix" evidence="7">
    <location>
        <begin position="239"/>
        <end position="251"/>
    </location>
</feature>
<feature type="strand" evidence="6">
    <location>
        <begin position="255"/>
        <end position="257"/>
    </location>
</feature>
<feature type="strand" evidence="7">
    <location>
        <begin position="267"/>
        <end position="269"/>
    </location>
</feature>
<feature type="strand" evidence="7">
    <location>
        <begin position="271"/>
        <end position="284"/>
    </location>
</feature>
<feature type="helix" evidence="7">
    <location>
        <begin position="288"/>
        <end position="296"/>
    </location>
</feature>
<feature type="strand" evidence="7">
    <location>
        <begin position="300"/>
        <end position="304"/>
    </location>
</feature>
<feature type="helix" evidence="7">
    <location>
        <begin position="309"/>
        <end position="315"/>
    </location>
</feature>
<feature type="helix" evidence="7">
    <location>
        <begin position="318"/>
        <end position="321"/>
    </location>
</feature>
<feature type="strand" evidence="7">
    <location>
        <begin position="327"/>
        <end position="335"/>
    </location>
</feature>
<feature type="strand" evidence="7">
    <location>
        <begin position="338"/>
        <end position="349"/>
    </location>
</feature>
<feature type="turn" evidence="7">
    <location>
        <begin position="350"/>
        <end position="355"/>
    </location>
</feature>
<feature type="helix" evidence="7">
    <location>
        <begin position="356"/>
        <end position="369"/>
    </location>
</feature>
<comment type="function">
    <text evidence="2">Catalyzes the NADPH-dependent formation of L-aspartate-semialdehyde (L-ASA) by the reductive dephosphorylation of L-aspartyl-4-phosphate.</text>
</comment>
<comment type="catalytic activity">
    <reaction evidence="2">
        <text>L-aspartate 4-semialdehyde + phosphate + NADP(+) = 4-phospho-L-aspartate + NADPH + H(+)</text>
        <dbReference type="Rhea" id="RHEA:24284"/>
        <dbReference type="ChEBI" id="CHEBI:15378"/>
        <dbReference type="ChEBI" id="CHEBI:43474"/>
        <dbReference type="ChEBI" id="CHEBI:57535"/>
        <dbReference type="ChEBI" id="CHEBI:57783"/>
        <dbReference type="ChEBI" id="CHEBI:58349"/>
        <dbReference type="ChEBI" id="CHEBI:537519"/>
        <dbReference type="EC" id="1.2.1.11"/>
    </reaction>
</comment>
<comment type="activity regulation">
    <text evidence="3">Inhibited by S-methyl-L-cysteine sulfoxide in vitro, via the formation of a covalently bound cysteine at the active site Cys-134.</text>
</comment>
<comment type="biophysicochemical properties">
    <kinetics>
        <KM evidence="2">0.19 mM for L-aspartate 4-semialdehyde</KM>
        <KM evidence="2">0.32 mM for NADP(+)</KM>
        <KM evidence="2">1.1 mM for phosphate</KM>
    </kinetics>
</comment>
<comment type="pathway">
    <text evidence="1">Amino-acid biosynthesis; L-lysine biosynthesis via DAP pathway; (S)-tetrahydrodipicolinate from L-aspartate: step 2/4.</text>
</comment>
<comment type="pathway">
    <text evidence="1">Amino-acid biosynthesis; L-methionine biosynthesis via de novo pathway; L-homoserine from L-aspartate: step 2/3.</text>
</comment>
<comment type="pathway">
    <text evidence="1">Amino-acid biosynthesis; L-threonine biosynthesis; L-threonine from L-aspartate: step 2/5.</text>
</comment>
<comment type="subunit">
    <text evidence="1 4">Homodimer.</text>
</comment>
<comment type="similarity">
    <text evidence="1">Belongs to the aspartate-semialdehyde dehydrogenase family.</text>
</comment>
<evidence type="ECO:0000255" key="1">
    <source>
        <dbReference type="HAMAP-Rule" id="MF_02121"/>
    </source>
</evidence>
<evidence type="ECO:0000269" key="2">
    <source>
    </source>
</evidence>
<evidence type="ECO:0000269" key="3">
    <source>
    </source>
</evidence>
<evidence type="ECO:0000305" key="4">
    <source>
    </source>
</evidence>
<evidence type="ECO:0007829" key="5">
    <source>
        <dbReference type="PDB" id="1MB4"/>
    </source>
</evidence>
<evidence type="ECO:0007829" key="6">
    <source>
        <dbReference type="PDB" id="1MC4"/>
    </source>
</evidence>
<evidence type="ECO:0007829" key="7">
    <source>
        <dbReference type="PDB" id="3PZR"/>
    </source>
</evidence>
<evidence type="ECO:0007829" key="8">
    <source>
        <dbReference type="PDB" id="3Q0E"/>
    </source>
</evidence>
<proteinExistence type="evidence at protein level"/>
<reference key="1">
    <citation type="journal article" date="2000" name="Nature">
        <title>DNA sequence of both chromosomes of the cholera pathogen Vibrio cholerae.</title>
        <authorList>
            <person name="Heidelberg J.F."/>
            <person name="Eisen J.A."/>
            <person name="Nelson W.C."/>
            <person name="Clayton R.A."/>
            <person name="Gwinn M.L."/>
            <person name="Dodson R.J."/>
            <person name="Haft D.H."/>
            <person name="Hickey E.K."/>
            <person name="Peterson J.D."/>
            <person name="Umayam L.A."/>
            <person name="Gill S.R."/>
            <person name="Nelson K.E."/>
            <person name="Read T.D."/>
            <person name="Tettelin H."/>
            <person name="Richardson D.L."/>
            <person name="Ermolaeva M.D."/>
            <person name="Vamathevan J.J."/>
            <person name="Bass S."/>
            <person name="Qin H."/>
            <person name="Dragoi I."/>
            <person name="Sellers P."/>
            <person name="McDonald L.A."/>
            <person name="Utterback T.R."/>
            <person name="Fleischmann R.D."/>
            <person name="Nierman W.C."/>
            <person name="White O."/>
            <person name="Salzberg S.L."/>
            <person name="Smith H.O."/>
            <person name="Colwell R.R."/>
            <person name="Mekalanos J.J."/>
            <person name="Venter J.C."/>
            <person name="Fraser C.M."/>
        </authorList>
    </citation>
    <scope>NUCLEOTIDE SEQUENCE [LARGE SCALE GENOMIC DNA]</scope>
    <source>
        <strain>ATCC 39315 / El Tor Inaba N16961</strain>
    </source>
</reference>
<reference key="2">
    <citation type="journal article" date="2002" name="Protein Expr. Purif.">
        <title>Expression and purification of aspartate beta-semialdehyde dehydrogenase from infectious microorganisms.</title>
        <authorList>
            <person name="Moore R.A."/>
            <person name="Bocik W.E."/>
            <person name="Viola R.E."/>
        </authorList>
    </citation>
    <scope>FUNCTION</scope>
    <scope>CATALYTIC ACTIVITY</scope>
    <scope>KINETIC PARAMETERS</scope>
    <source>
        <strain>ATCC 39315 / El Tor Inaba N16961</strain>
    </source>
</reference>
<reference key="3">
    <citation type="journal article" date="2003" name="Protein Sci.">
        <title>A structural basis for the mechanism of aspartate-beta-semialdehyde dehydrogenase from Vibrio cholerae.</title>
        <authorList>
            <person name="Blanco J."/>
            <person name="Moore R.A."/>
            <person name="Kabaleeswaran V."/>
            <person name="Viola R.E."/>
        </authorList>
    </citation>
    <scope>X-RAY CRYSTALLOGRAPHY (1.84 ANGSTROMS) OF APOENZYME AND IN COMPLEX WITH NADP AND CYSTEINE</scope>
    <scope>ACTIVITY REGULATION</scope>
    <scope>ACTIVE SITE</scope>
    <scope>SUBUNIT</scope>
    <source>
        <strain>ATCC 39315 / El Tor Inaba N16961</strain>
    </source>
</reference>
<protein>
    <recommendedName>
        <fullName>Aspartate-semialdehyde dehydrogenase 1</fullName>
        <shortName>ASA dehydrogenase 1</shortName>
        <shortName>ASADH 1</shortName>
        <ecNumber evidence="2">1.2.1.11</ecNumber>
    </recommendedName>
    <alternativeName>
        <fullName>Aspartate-beta-semialdehyde dehydrogenase 1</fullName>
    </alternativeName>
</protein>
<sequence>MRVGLVGWRGMVGSVLMQRMVEERDFDLIEPVFFSTSQIGVPAPNFGKDAGMLHDAFDIESLKQLDAVITCQGGSYTEKVYPALRQAGWKGYWIDAASTLRMDKEAIITLDPVNLKQILHGIHHGTKTFVGGNCTVSLMLMALGGLYERGLVEWMSAMTYQAASGAGAQNMRELISQMGVINDAVSSELANPASSILDIDKKVAETMRSGSFPTDNFGVPLAGSLIPWIDVKRDNGQSKEEWKAGVEANKILGLQDSPVPIDGTCVRIGAMRCHSQALTIKLKQNIPLDEIEEMIATHNDWVKVIPNERDITARELTPAKVTGTLSVPVGRLRKMAMGDDFLNAFTVGDQLLWGAAEPLRRTLRIILAEK</sequence>
<gene>
    <name type="primary">asd1</name>
    <name type="ordered locus">VC_2036</name>
</gene>
<accession>Q9KQG2</accession>
<name>DHAS1_VIBCH</name>
<keyword id="KW-0002">3D-structure</keyword>
<keyword id="KW-0028">Amino-acid biosynthesis</keyword>
<keyword id="KW-0220">Diaminopimelate biosynthesis</keyword>
<keyword id="KW-0457">Lysine biosynthesis</keyword>
<keyword id="KW-0486">Methionine biosynthesis</keyword>
<keyword id="KW-0521">NADP</keyword>
<keyword id="KW-0560">Oxidoreductase</keyword>
<keyword id="KW-1185">Reference proteome</keyword>
<keyword id="KW-0791">Threonine biosynthesis</keyword>